<reference key="1">
    <citation type="journal article" date="2007" name="J. Bacteriol.">
        <title>Genome sequence of Avery's virulent serotype 2 strain D39 of Streptococcus pneumoniae and comparison with that of unencapsulated laboratory strain R6.</title>
        <authorList>
            <person name="Lanie J.A."/>
            <person name="Ng W.-L."/>
            <person name="Kazmierczak K.M."/>
            <person name="Andrzejewski T.M."/>
            <person name="Davidsen T.M."/>
            <person name="Wayne K.J."/>
            <person name="Tettelin H."/>
            <person name="Glass J.I."/>
            <person name="Winkler M.E."/>
        </authorList>
    </citation>
    <scope>NUCLEOTIDE SEQUENCE [LARGE SCALE GENOMIC DNA]</scope>
    <source>
        <strain>D39 / NCTC 7466</strain>
    </source>
</reference>
<sequence length="90" mass="10222">MAVKIRLTRMGSKKKPFYRINVADSRSPRDGRFIETVGTYNPLVAENQVTLKEDRVLAWLANGAQPSDTVRNILSKEGVLKKFHDSKFSK</sequence>
<protein>
    <recommendedName>
        <fullName evidence="1">Small ribosomal subunit protein bS16</fullName>
    </recommendedName>
    <alternativeName>
        <fullName evidence="2">30S ribosomal protein S16</fullName>
    </alternativeName>
</protein>
<keyword id="KW-1185">Reference proteome</keyword>
<keyword id="KW-0687">Ribonucleoprotein</keyword>
<keyword id="KW-0689">Ribosomal protein</keyword>
<gene>
    <name evidence="1" type="primary">rpsP</name>
    <name type="ordered locus">SPD_0674</name>
</gene>
<accession>Q04LD0</accession>
<proteinExistence type="inferred from homology"/>
<evidence type="ECO:0000255" key="1">
    <source>
        <dbReference type="HAMAP-Rule" id="MF_00385"/>
    </source>
</evidence>
<evidence type="ECO:0000305" key="2"/>
<name>RS16_STRP2</name>
<organism>
    <name type="scientific">Streptococcus pneumoniae serotype 2 (strain D39 / NCTC 7466)</name>
    <dbReference type="NCBI Taxonomy" id="373153"/>
    <lineage>
        <taxon>Bacteria</taxon>
        <taxon>Bacillati</taxon>
        <taxon>Bacillota</taxon>
        <taxon>Bacilli</taxon>
        <taxon>Lactobacillales</taxon>
        <taxon>Streptococcaceae</taxon>
        <taxon>Streptococcus</taxon>
    </lineage>
</organism>
<comment type="similarity">
    <text evidence="1">Belongs to the bacterial ribosomal protein bS16 family.</text>
</comment>
<dbReference type="EMBL" id="CP000410">
    <property type="protein sequence ID" value="ABJ54325.1"/>
    <property type="molecule type" value="Genomic_DNA"/>
</dbReference>
<dbReference type="RefSeq" id="WP_000268761.1">
    <property type="nucleotide sequence ID" value="NZ_JAMLJR010000001.1"/>
</dbReference>
<dbReference type="SMR" id="Q04LD0"/>
<dbReference type="PaxDb" id="373153-SPD_0674"/>
<dbReference type="GeneID" id="45653854"/>
<dbReference type="KEGG" id="spd:SPD_0674"/>
<dbReference type="eggNOG" id="COG0228">
    <property type="taxonomic scope" value="Bacteria"/>
</dbReference>
<dbReference type="HOGENOM" id="CLU_100590_5_0_9"/>
<dbReference type="BioCyc" id="SPNE373153:G1G6V-743-MONOMER"/>
<dbReference type="Proteomes" id="UP000001452">
    <property type="component" value="Chromosome"/>
</dbReference>
<dbReference type="GO" id="GO:0005737">
    <property type="term" value="C:cytoplasm"/>
    <property type="evidence" value="ECO:0007669"/>
    <property type="project" value="UniProtKB-ARBA"/>
</dbReference>
<dbReference type="GO" id="GO:0015935">
    <property type="term" value="C:small ribosomal subunit"/>
    <property type="evidence" value="ECO:0007669"/>
    <property type="project" value="TreeGrafter"/>
</dbReference>
<dbReference type="GO" id="GO:0003735">
    <property type="term" value="F:structural constituent of ribosome"/>
    <property type="evidence" value="ECO:0007669"/>
    <property type="project" value="InterPro"/>
</dbReference>
<dbReference type="GO" id="GO:0006412">
    <property type="term" value="P:translation"/>
    <property type="evidence" value="ECO:0007669"/>
    <property type="project" value="UniProtKB-UniRule"/>
</dbReference>
<dbReference type="FunFam" id="3.30.1320.10:FF:000002">
    <property type="entry name" value="30S ribosomal protein S16"/>
    <property type="match status" value="1"/>
</dbReference>
<dbReference type="Gene3D" id="3.30.1320.10">
    <property type="match status" value="1"/>
</dbReference>
<dbReference type="HAMAP" id="MF_00385">
    <property type="entry name" value="Ribosomal_bS16"/>
    <property type="match status" value="1"/>
</dbReference>
<dbReference type="InterPro" id="IPR000307">
    <property type="entry name" value="Ribosomal_bS16"/>
</dbReference>
<dbReference type="InterPro" id="IPR023803">
    <property type="entry name" value="Ribosomal_bS16_dom_sf"/>
</dbReference>
<dbReference type="NCBIfam" id="TIGR00002">
    <property type="entry name" value="S16"/>
    <property type="match status" value="1"/>
</dbReference>
<dbReference type="PANTHER" id="PTHR12919">
    <property type="entry name" value="30S RIBOSOMAL PROTEIN S16"/>
    <property type="match status" value="1"/>
</dbReference>
<dbReference type="PANTHER" id="PTHR12919:SF20">
    <property type="entry name" value="SMALL RIBOSOMAL SUBUNIT PROTEIN BS16M"/>
    <property type="match status" value="1"/>
</dbReference>
<dbReference type="Pfam" id="PF00886">
    <property type="entry name" value="Ribosomal_S16"/>
    <property type="match status" value="1"/>
</dbReference>
<dbReference type="SUPFAM" id="SSF54565">
    <property type="entry name" value="Ribosomal protein S16"/>
    <property type="match status" value="1"/>
</dbReference>
<feature type="chain" id="PRO_1000049358" description="Small ribosomal subunit protein bS16">
    <location>
        <begin position="1"/>
        <end position="90"/>
    </location>
</feature>